<reference key="1">
    <citation type="journal article" date="2003" name="Nat. Genet.">
        <title>Comparative analysis of the genome sequences of Bordetella pertussis, Bordetella parapertussis and Bordetella bronchiseptica.</title>
        <authorList>
            <person name="Parkhill J."/>
            <person name="Sebaihia M."/>
            <person name="Preston A."/>
            <person name="Murphy L.D."/>
            <person name="Thomson N.R."/>
            <person name="Harris D.E."/>
            <person name="Holden M.T.G."/>
            <person name="Churcher C.M."/>
            <person name="Bentley S.D."/>
            <person name="Mungall K.L."/>
            <person name="Cerdeno-Tarraga A.-M."/>
            <person name="Temple L."/>
            <person name="James K.D."/>
            <person name="Harris B."/>
            <person name="Quail M.A."/>
            <person name="Achtman M."/>
            <person name="Atkin R."/>
            <person name="Baker S."/>
            <person name="Basham D."/>
            <person name="Bason N."/>
            <person name="Cherevach I."/>
            <person name="Chillingworth T."/>
            <person name="Collins M."/>
            <person name="Cronin A."/>
            <person name="Davis P."/>
            <person name="Doggett J."/>
            <person name="Feltwell T."/>
            <person name="Goble A."/>
            <person name="Hamlin N."/>
            <person name="Hauser H."/>
            <person name="Holroyd S."/>
            <person name="Jagels K."/>
            <person name="Leather S."/>
            <person name="Moule S."/>
            <person name="Norberczak H."/>
            <person name="O'Neil S."/>
            <person name="Ormond D."/>
            <person name="Price C."/>
            <person name="Rabbinowitsch E."/>
            <person name="Rutter S."/>
            <person name="Sanders M."/>
            <person name="Saunders D."/>
            <person name="Seeger K."/>
            <person name="Sharp S."/>
            <person name="Simmonds M."/>
            <person name="Skelton J."/>
            <person name="Squares R."/>
            <person name="Squares S."/>
            <person name="Stevens K."/>
            <person name="Unwin L."/>
            <person name="Whitehead S."/>
            <person name="Barrell B.G."/>
            <person name="Maskell D.J."/>
        </authorList>
    </citation>
    <scope>NUCLEOTIDE SEQUENCE [LARGE SCALE GENOMIC DNA]</scope>
    <source>
        <strain>Tohama I / ATCC BAA-589 / NCTC 13251</strain>
    </source>
</reference>
<keyword id="KW-0004">4Fe-4S</keyword>
<keyword id="KW-0408">Iron</keyword>
<keyword id="KW-0411">Iron-sulfur</keyword>
<keyword id="KW-0414">Isoprene biosynthesis</keyword>
<keyword id="KW-0479">Metal-binding</keyword>
<keyword id="KW-0560">Oxidoreductase</keyword>
<keyword id="KW-1185">Reference proteome</keyword>
<dbReference type="EC" id="1.17.7.4" evidence="1"/>
<dbReference type="EMBL" id="BX640414">
    <property type="protein sequence ID" value="CAE41533.1"/>
    <property type="molecule type" value="Genomic_DNA"/>
</dbReference>
<dbReference type="RefSeq" id="NP_880009.1">
    <property type="nucleotide sequence ID" value="NC_002929.2"/>
</dbReference>
<dbReference type="RefSeq" id="WP_010930264.1">
    <property type="nucleotide sequence ID" value="NZ_CP039022.1"/>
</dbReference>
<dbReference type="SMR" id="Q7VYS2"/>
<dbReference type="STRING" id="257313.BP1237"/>
<dbReference type="PaxDb" id="257313-BP1237"/>
<dbReference type="GeneID" id="93203618"/>
<dbReference type="KEGG" id="bpe:BP1237"/>
<dbReference type="PATRIC" id="fig|257313.5.peg.1333"/>
<dbReference type="eggNOG" id="COG0761">
    <property type="taxonomic scope" value="Bacteria"/>
</dbReference>
<dbReference type="HOGENOM" id="CLU_027486_1_0_4"/>
<dbReference type="UniPathway" id="UPA00056">
    <property type="reaction ID" value="UER00097"/>
</dbReference>
<dbReference type="UniPathway" id="UPA00059">
    <property type="reaction ID" value="UER00105"/>
</dbReference>
<dbReference type="Proteomes" id="UP000002676">
    <property type="component" value="Chromosome"/>
</dbReference>
<dbReference type="GO" id="GO:0051539">
    <property type="term" value="F:4 iron, 4 sulfur cluster binding"/>
    <property type="evidence" value="ECO:0007669"/>
    <property type="project" value="UniProtKB-UniRule"/>
</dbReference>
<dbReference type="GO" id="GO:0051745">
    <property type="term" value="F:4-hydroxy-3-methylbut-2-enyl diphosphate reductase activity"/>
    <property type="evidence" value="ECO:0007669"/>
    <property type="project" value="UniProtKB-UniRule"/>
</dbReference>
<dbReference type="GO" id="GO:0046872">
    <property type="term" value="F:metal ion binding"/>
    <property type="evidence" value="ECO:0007669"/>
    <property type="project" value="UniProtKB-KW"/>
</dbReference>
<dbReference type="GO" id="GO:0050992">
    <property type="term" value="P:dimethylallyl diphosphate biosynthetic process"/>
    <property type="evidence" value="ECO:0007669"/>
    <property type="project" value="UniProtKB-UniRule"/>
</dbReference>
<dbReference type="GO" id="GO:0019288">
    <property type="term" value="P:isopentenyl diphosphate biosynthetic process, methylerythritol 4-phosphate pathway"/>
    <property type="evidence" value="ECO:0007669"/>
    <property type="project" value="UniProtKB-UniRule"/>
</dbReference>
<dbReference type="GO" id="GO:0016114">
    <property type="term" value="P:terpenoid biosynthetic process"/>
    <property type="evidence" value="ECO:0007669"/>
    <property type="project" value="UniProtKB-UniRule"/>
</dbReference>
<dbReference type="CDD" id="cd13944">
    <property type="entry name" value="lytB_ispH"/>
    <property type="match status" value="1"/>
</dbReference>
<dbReference type="Gene3D" id="3.40.50.11270">
    <property type="match status" value="1"/>
</dbReference>
<dbReference type="Gene3D" id="3.40.1010.20">
    <property type="entry name" value="4-hydroxy-3-methylbut-2-enyl diphosphate reductase, catalytic domain"/>
    <property type="match status" value="2"/>
</dbReference>
<dbReference type="HAMAP" id="MF_00191">
    <property type="entry name" value="IspH"/>
    <property type="match status" value="1"/>
</dbReference>
<dbReference type="InterPro" id="IPR003451">
    <property type="entry name" value="LytB/IspH"/>
</dbReference>
<dbReference type="NCBIfam" id="TIGR00216">
    <property type="entry name" value="ispH_lytB"/>
    <property type="match status" value="1"/>
</dbReference>
<dbReference type="NCBIfam" id="NF002188">
    <property type="entry name" value="PRK01045.1-2"/>
    <property type="match status" value="1"/>
</dbReference>
<dbReference type="NCBIfam" id="NF002190">
    <property type="entry name" value="PRK01045.1-4"/>
    <property type="match status" value="1"/>
</dbReference>
<dbReference type="PANTHER" id="PTHR30426">
    <property type="entry name" value="4-HYDROXY-3-METHYLBUT-2-ENYL DIPHOSPHATE REDUCTASE"/>
    <property type="match status" value="1"/>
</dbReference>
<dbReference type="PANTHER" id="PTHR30426:SF0">
    <property type="entry name" value="4-HYDROXY-3-METHYLBUT-2-ENYL DIPHOSPHATE REDUCTASE"/>
    <property type="match status" value="1"/>
</dbReference>
<dbReference type="Pfam" id="PF02401">
    <property type="entry name" value="LYTB"/>
    <property type="match status" value="1"/>
</dbReference>
<accession>Q7VYS2</accession>
<protein>
    <recommendedName>
        <fullName evidence="1">4-hydroxy-3-methylbut-2-enyl diphosphate reductase</fullName>
        <shortName evidence="1">HMBPP reductase</shortName>
        <ecNumber evidence="1">1.17.7.4</ecNumber>
    </recommendedName>
</protein>
<evidence type="ECO:0000255" key="1">
    <source>
        <dbReference type="HAMAP-Rule" id="MF_00191"/>
    </source>
</evidence>
<organism>
    <name type="scientific">Bordetella pertussis (strain Tohama I / ATCC BAA-589 / NCTC 13251)</name>
    <dbReference type="NCBI Taxonomy" id="257313"/>
    <lineage>
        <taxon>Bacteria</taxon>
        <taxon>Pseudomonadati</taxon>
        <taxon>Pseudomonadota</taxon>
        <taxon>Betaproteobacteria</taxon>
        <taxon>Burkholderiales</taxon>
        <taxon>Alcaligenaceae</taxon>
        <taxon>Bordetella</taxon>
    </lineage>
</organism>
<gene>
    <name evidence="1" type="primary">ispH</name>
    <name type="synonym">lytB</name>
    <name type="ordered locus">BP1237</name>
</gene>
<sequence>MTAEVTAADAEVLLAQPRGFCAGVDRAIDIVERALELHGAPIYVRHEIVHNRYVVEDLRGKGAVFIDELDQAPAGAIVVFSAHGVSQAVRGEAEARGLRVFDATCPLVTKVHIEVARMRAAGREIVMIGHKGHPEVEGTLGQAQGGMYLVETVEDVAALQVSDPGNLAYVTQTTLSVDDAAAVAGALKARFPGIVEPKKSDICYATQNRQDAVKLLAPECDLVLVVGSTNSSNSNRLREVAERKGVAAYLIDGAHAIDPAWLQGRRSIGITAGASAPEVLVQQVVERVRELGAVSVRTMPGLEESVAFPLPKGLSRKIAQTESLE</sequence>
<comment type="function">
    <text evidence="1">Catalyzes the conversion of 1-hydroxy-2-methyl-2-(E)-butenyl 4-diphosphate (HMBPP) into a mixture of isopentenyl diphosphate (IPP) and dimethylallyl diphosphate (DMAPP). Acts in the terminal step of the DOXP/MEP pathway for isoprenoid precursor biosynthesis.</text>
</comment>
<comment type="catalytic activity">
    <reaction evidence="1">
        <text>isopentenyl diphosphate + 2 oxidized [2Fe-2S]-[ferredoxin] + H2O = (2E)-4-hydroxy-3-methylbut-2-enyl diphosphate + 2 reduced [2Fe-2S]-[ferredoxin] + 2 H(+)</text>
        <dbReference type="Rhea" id="RHEA:24488"/>
        <dbReference type="Rhea" id="RHEA-COMP:10000"/>
        <dbReference type="Rhea" id="RHEA-COMP:10001"/>
        <dbReference type="ChEBI" id="CHEBI:15377"/>
        <dbReference type="ChEBI" id="CHEBI:15378"/>
        <dbReference type="ChEBI" id="CHEBI:33737"/>
        <dbReference type="ChEBI" id="CHEBI:33738"/>
        <dbReference type="ChEBI" id="CHEBI:128753"/>
        <dbReference type="ChEBI" id="CHEBI:128769"/>
        <dbReference type="EC" id="1.17.7.4"/>
    </reaction>
</comment>
<comment type="catalytic activity">
    <reaction evidence="1">
        <text>dimethylallyl diphosphate + 2 oxidized [2Fe-2S]-[ferredoxin] + H2O = (2E)-4-hydroxy-3-methylbut-2-enyl diphosphate + 2 reduced [2Fe-2S]-[ferredoxin] + 2 H(+)</text>
        <dbReference type="Rhea" id="RHEA:24825"/>
        <dbReference type="Rhea" id="RHEA-COMP:10000"/>
        <dbReference type="Rhea" id="RHEA-COMP:10001"/>
        <dbReference type="ChEBI" id="CHEBI:15377"/>
        <dbReference type="ChEBI" id="CHEBI:15378"/>
        <dbReference type="ChEBI" id="CHEBI:33737"/>
        <dbReference type="ChEBI" id="CHEBI:33738"/>
        <dbReference type="ChEBI" id="CHEBI:57623"/>
        <dbReference type="ChEBI" id="CHEBI:128753"/>
        <dbReference type="EC" id="1.17.7.4"/>
    </reaction>
</comment>
<comment type="cofactor">
    <cofactor evidence="1">
        <name>[4Fe-4S] cluster</name>
        <dbReference type="ChEBI" id="CHEBI:49883"/>
    </cofactor>
    <text evidence="1">Binds 1 [4Fe-4S] cluster per subunit.</text>
</comment>
<comment type="pathway">
    <text evidence="1">Isoprenoid biosynthesis; dimethylallyl diphosphate biosynthesis; dimethylallyl diphosphate from (2E)-4-hydroxy-3-methylbutenyl diphosphate: step 1/1.</text>
</comment>
<comment type="pathway">
    <text evidence="1">Isoprenoid biosynthesis; isopentenyl diphosphate biosynthesis via DXP pathway; isopentenyl diphosphate from 1-deoxy-D-xylulose 5-phosphate: step 6/6.</text>
</comment>
<comment type="similarity">
    <text evidence="1">Belongs to the IspH family.</text>
</comment>
<feature type="chain" id="PRO_0000128783" description="4-hydroxy-3-methylbut-2-enyl diphosphate reductase">
    <location>
        <begin position="1"/>
        <end position="325"/>
    </location>
</feature>
<feature type="active site" description="Proton donor" evidence="1">
    <location>
        <position position="135"/>
    </location>
</feature>
<feature type="binding site" evidence="1">
    <location>
        <position position="21"/>
    </location>
    <ligand>
        <name>[4Fe-4S] cluster</name>
        <dbReference type="ChEBI" id="CHEBI:49883"/>
    </ligand>
</feature>
<feature type="binding site" evidence="1">
    <location>
        <position position="50"/>
    </location>
    <ligand>
        <name>(2E)-4-hydroxy-3-methylbut-2-enyl diphosphate</name>
        <dbReference type="ChEBI" id="CHEBI:128753"/>
    </ligand>
</feature>
<feature type="binding site" evidence="1">
    <location>
        <position position="50"/>
    </location>
    <ligand>
        <name>dimethylallyl diphosphate</name>
        <dbReference type="ChEBI" id="CHEBI:57623"/>
    </ligand>
</feature>
<feature type="binding site" evidence="1">
    <location>
        <position position="50"/>
    </location>
    <ligand>
        <name>isopentenyl diphosphate</name>
        <dbReference type="ChEBI" id="CHEBI:128769"/>
    </ligand>
</feature>
<feature type="binding site" evidence="1">
    <location>
        <position position="83"/>
    </location>
    <ligand>
        <name>(2E)-4-hydroxy-3-methylbut-2-enyl diphosphate</name>
        <dbReference type="ChEBI" id="CHEBI:128753"/>
    </ligand>
</feature>
<feature type="binding site" evidence="1">
    <location>
        <position position="83"/>
    </location>
    <ligand>
        <name>dimethylallyl diphosphate</name>
        <dbReference type="ChEBI" id="CHEBI:57623"/>
    </ligand>
</feature>
<feature type="binding site" evidence="1">
    <location>
        <position position="83"/>
    </location>
    <ligand>
        <name>isopentenyl diphosphate</name>
        <dbReference type="ChEBI" id="CHEBI:128769"/>
    </ligand>
</feature>
<feature type="binding site" evidence="1">
    <location>
        <position position="105"/>
    </location>
    <ligand>
        <name>[4Fe-4S] cluster</name>
        <dbReference type="ChEBI" id="CHEBI:49883"/>
    </ligand>
</feature>
<feature type="binding site" evidence="1">
    <location>
        <position position="133"/>
    </location>
    <ligand>
        <name>(2E)-4-hydroxy-3-methylbut-2-enyl diphosphate</name>
        <dbReference type="ChEBI" id="CHEBI:128753"/>
    </ligand>
</feature>
<feature type="binding site" evidence="1">
    <location>
        <position position="133"/>
    </location>
    <ligand>
        <name>dimethylallyl diphosphate</name>
        <dbReference type="ChEBI" id="CHEBI:57623"/>
    </ligand>
</feature>
<feature type="binding site" evidence="1">
    <location>
        <position position="133"/>
    </location>
    <ligand>
        <name>isopentenyl diphosphate</name>
        <dbReference type="ChEBI" id="CHEBI:128769"/>
    </ligand>
</feature>
<feature type="binding site" evidence="1">
    <location>
        <position position="173"/>
    </location>
    <ligand>
        <name>(2E)-4-hydroxy-3-methylbut-2-enyl diphosphate</name>
        <dbReference type="ChEBI" id="CHEBI:128753"/>
    </ligand>
</feature>
<feature type="binding site" evidence="1">
    <location>
        <position position="203"/>
    </location>
    <ligand>
        <name>[4Fe-4S] cluster</name>
        <dbReference type="ChEBI" id="CHEBI:49883"/>
    </ligand>
</feature>
<feature type="binding site" evidence="1">
    <location>
        <position position="231"/>
    </location>
    <ligand>
        <name>(2E)-4-hydroxy-3-methylbut-2-enyl diphosphate</name>
        <dbReference type="ChEBI" id="CHEBI:128753"/>
    </ligand>
</feature>
<feature type="binding site" evidence="1">
    <location>
        <position position="231"/>
    </location>
    <ligand>
        <name>dimethylallyl diphosphate</name>
        <dbReference type="ChEBI" id="CHEBI:57623"/>
    </ligand>
</feature>
<feature type="binding site" evidence="1">
    <location>
        <position position="231"/>
    </location>
    <ligand>
        <name>isopentenyl diphosphate</name>
        <dbReference type="ChEBI" id="CHEBI:128769"/>
    </ligand>
</feature>
<feature type="binding site" evidence="1">
    <location>
        <position position="232"/>
    </location>
    <ligand>
        <name>(2E)-4-hydroxy-3-methylbut-2-enyl diphosphate</name>
        <dbReference type="ChEBI" id="CHEBI:128753"/>
    </ligand>
</feature>
<feature type="binding site" evidence="1">
    <location>
        <position position="232"/>
    </location>
    <ligand>
        <name>dimethylallyl diphosphate</name>
        <dbReference type="ChEBI" id="CHEBI:57623"/>
    </ligand>
</feature>
<feature type="binding site" evidence="1">
    <location>
        <position position="232"/>
    </location>
    <ligand>
        <name>isopentenyl diphosphate</name>
        <dbReference type="ChEBI" id="CHEBI:128769"/>
    </ligand>
</feature>
<feature type="binding site" evidence="1">
    <location>
        <position position="233"/>
    </location>
    <ligand>
        <name>(2E)-4-hydroxy-3-methylbut-2-enyl diphosphate</name>
        <dbReference type="ChEBI" id="CHEBI:128753"/>
    </ligand>
</feature>
<feature type="binding site" evidence="1">
    <location>
        <position position="233"/>
    </location>
    <ligand>
        <name>dimethylallyl diphosphate</name>
        <dbReference type="ChEBI" id="CHEBI:57623"/>
    </ligand>
</feature>
<feature type="binding site" evidence="1">
    <location>
        <position position="233"/>
    </location>
    <ligand>
        <name>isopentenyl diphosphate</name>
        <dbReference type="ChEBI" id="CHEBI:128769"/>
    </ligand>
</feature>
<feature type="binding site" evidence="1">
    <location>
        <position position="275"/>
    </location>
    <ligand>
        <name>(2E)-4-hydroxy-3-methylbut-2-enyl diphosphate</name>
        <dbReference type="ChEBI" id="CHEBI:128753"/>
    </ligand>
</feature>
<feature type="binding site" evidence="1">
    <location>
        <position position="275"/>
    </location>
    <ligand>
        <name>dimethylallyl diphosphate</name>
        <dbReference type="ChEBI" id="CHEBI:57623"/>
    </ligand>
</feature>
<feature type="binding site" evidence="1">
    <location>
        <position position="275"/>
    </location>
    <ligand>
        <name>isopentenyl diphosphate</name>
        <dbReference type="ChEBI" id="CHEBI:128769"/>
    </ligand>
</feature>
<name>ISPH_BORPE</name>
<proteinExistence type="inferred from homology"/>